<evidence type="ECO:0000255" key="1"/>
<evidence type="ECO:0000255" key="2">
    <source>
        <dbReference type="PROSITE-ProRule" id="PRU00035"/>
    </source>
</evidence>
<evidence type="ECO:0000255" key="3">
    <source>
        <dbReference type="PROSITE-ProRule" id="PRU00541"/>
    </source>
</evidence>
<evidence type="ECO:0000255" key="4">
    <source>
        <dbReference type="PROSITE-ProRule" id="PRU00542"/>
    </source>
</evidence>
<evidence type="ECO:0000255" key="5">
    <source>
        <dbReference type="PROSITE-ProRule" id="PRU00768"/>
    </source>
</evidence>
<evidence type="ECO:0000255" key="6">
    <source>
        <dbReference type="PROSITE-ProRule" id="PRU01001"/>
    </source>
</evidence>
<evidence type="ECO:0000256" key="7">
    <source>
        <dbReference type="SAM" id="MobiDB-lite"/>
    </source>
</evidence>
<evidence type="ECO:0000269" key="8">
    <source>
    </source>
</evidence>
<evidence type="ECO:0000269" key="9">
    <source>
    </source>
</evidence>
<evidence type="ECO:0000269" key="10">
    <source>
    </source>
</evidence>
<evidence type="ECO:0000269" key="11">
    <source>
    </source>
</evidence>
<evidence type="ECO:0000269" key="12">
    <source>
    </source>
</evidence>
<evidence type="ECO:0000269" key="13">
    <source>
    </source>
</evidence>
<evidence type="ECO:0000269" key="14">
    <source>
    </source>
</evidence>
<evidence type="ECO:0000269" key="15">
    <source>
    </source>
</evidence>
<evidence type="ECO:0000269" key="16">
    <source>
    </source>
</evidence>
<evidence type="ECO:0000303" key="17">
    <source>
    </source>
</evidence>
<evidence type="ECO:0000303" key="18">
    <source>
    </source>
</evidence>
<evidence type="ECO:0000305" key="19"/>
<evidence type="ECO:0000312" key="20">
    <source>
        <dbReference type="Araport" id="AT2G46020"/>
    </source>
</evidence>
<evidence type="ECO:0000312" key="21">
    <source>
        <dbReference type="EMBL" id="AAC62901.1"/>
    </source>
</evidence>
<evidence type="ECO:0007744" key="22">
    <source>
    </source>
</evidence>
<evidence type="ECO:0007744" key="23">
    <source>
    </source>
</evidence>
<evidence type="ECO:0007744" key="24">
    <source>
    </source>
</evidence>
<evidence type="ECO:0007744" key="25">
    <source>
    </source>
</evidence>
<comment type="function">
    <text evidence="9 10 12 15 16">ATPase subunit of a multiprotein complex equivalent of the SWI/SNF complex that acts by remodeling the chromatin by catalyzing an ATP-dependent alteration in the structure of nucleosomal DNA. Represses embryonic genes in leaves and controls shoot development and flowering. Activates flower homeotic genes. The association of BRM with its target genes requires REF6 (PubMed:27111034). Necessary to acquire heat stress (HS) memory, by globally binding to HS memory genes (PubMed:27680998).</text>
</comment>
<comment type="catalytic activity">
    <reaction>
        <text>ATP + H2O = ADP + phosphate + H(+)</text>
        <dbReference type="Rhea" id="RHEA:13065"/>
        <dbReference type="ChEBI" id="CHEBI:15377"/>
        <dbReference type="ChEBI" id="CHEBI:15378"/>
        <dbReference type="ChEBI" id="CHEBI:30616"/>
        <dbReference type="ChEBI" id="CHEBI:43474"/>
        <dbReference type="ChEBI" id="CHEBI:456216"/>
        <dbReference type="EC" id="3.6.4.12"/>
    </reaction>
</comment>
<comment type="subunit">
    <text evidence="8 9 11 14 15 16">Interacts with SWI3B, SWI3C, H3 and H4, but not with SWI3A, SWI3D or BSH (PubMed:15371304, PubMed:16845477, PubMed:17825834). Interacts with LFY (PubMed:22323601). Interacts with REF6 (PubMed:27111034). Binds to FGT1 (PubMed:27680998).</text>
</comment>
<comment type="interaction">
    <interactant intactId="EBI-2025535">
        <id>Q6EVK6</id>
    </interactant>
    <interactant intactId="EBI-1644366">
        <id>Q00958</id>
        <label>LFY</label>
    </interactant>
    <organismsDiffer>false</organismsDiffer>
    <experiments>3</experiments>
</comment>
<comment type="interaction">
    <interactant intactId="EBI-2025535">
        <id>Q6EVK6</id>
    </interactant>
    <interactant intactId="EBI-6553299">
        <id>Q9ZVD0</id>
        <label>SE</label>
    </interactant>
    <organismsDiffer>false</organismsDiffer>
    <experiments>6</experiments>
</comment>
<comment type="interaction">
    <interactant intactId="EBI-2025535">
        <id>Q6EVK6</id>
    </interactant>
    <interactant intactId="EBI-592020">
        <id>O22456</id>
        <label>SEP3</label>
    </interactant>
    <organismsDiffer>false</organismsDiffer>
    <experiments>2</experiments>
</comment>
<comment type="subcellular location">
    <subcellularLocation>
        <location evidence="5 8 13 15">Nucleus</location>
    </subcellularLocation>
</comment>
<comment type="alternative products">
    <event type="alternative splicing"/>
    <isoform>
        <id>Q6EVK6-1</id>
        <name>1</name>
        <sequence type="displayed"/>
    </isoform>
    <isoform>
        <id>Q6EVK6-2</id>
        <name>2</name>
        <sequence type="described" ref="VSP_034709"/>
    </isoform>
</comment>
<comment type="tissue specificity">
    <text evidence="8">Highly expressed in inflorescences and leaves. Low expression in siliques, roots and seedlings. Detected in shoot apical meristem, root meristem, vascular tissue of developing leaves, petals, stamens filaments, anthers and carpels.</text>
</comment>
<comment type="domain">
    <text>The bromodomain binds histones.</text>
</comment>
<comment type="domain">
    <text>The AT-hook region (1568-1919) contains at least 3 DNA-binding sites with different characteristics.</text>
</comment>
<comment type="disruption phenotype">
    <text evidence="16">Sterility. Reduced heat stress (HS) memory associated with a premature decline of expression of HSA32, HSP18.2, HSP21, HSP22 and HSP101 after HS. The double mutant brm-1 fgt1-1 exhibits retarted seedling development resulting in reduced development and delayed leaf initiation, as well as delayed flowering time.</text>
</comment>
<comment type="miscellaneous">
    <text>Was previously split between At2g46010 and At2g46020.</text>
</comment>
<comment type="similarity">
    <text evidence="19">Belongs to the SNF2/RAD54 helicase family.</text>
</comment>
<comment type="sequence caution" evidence="19">
    <conflict type="erroneous gene model prediction">
        <sequence resource="EMBL-CDS" id="AAC62900"/>
    </conflict>
</comment>
<comment type="sequence caution" evidence="19">
    <conflict type="erroneous gene model prediction">
        <sequence resource="EMBL-CDS" id="AAC62901"/>
    </conflict>
</comment>
<comment type="sequence caution" evidence="19">
    <conflict type="erroneous gene model prediction">
        <sequence resource="EMBL-CDS" id="AAM14971"/>
    </conflict>
</comment>
<feature type="chain" id="PRO_0000343902" description="ATP-dependent helicase BRM">
    <location>
        <begin position="1"/>
        <end position="2193"/>
    </location>
</feature>
<feature type="domain" description="QLQ" evidence="6">
    <location>
        <begin position="463"/>
        <end position="499"/>
    </location>
</feature>
<feature type="domain" description="Helicase ATP-binding" evidence="3">
    <location>
        <begin position="993"/>
        <end position="1158"/>
    </location>
</feature>
<feature type="domain" description="Helicase C-terminal" evidence="4">
    <location>
        <begin position="1312"/>
        <end position="1489"/>
    </location>
</feature>
<feature type="domain" description="Bromo" evidence="2">
    <location>
        <begin position="1895"/>
        <end position="2005"/>
    </location>
</feature>
<feature type="region of interest" description="Disordered" evidence="7">
    <location>
        <begin position="1"/>
        <end position="126"/>
    </location>
</feature>
<feature type="region of interest" description="Disordered" evidence="7">
    <location>
        <begin position="175"/>
        <end position="231"/>
    </location>
</feature>
<feature type="region of interest" description="Disordered" evidence="7">
    <location>
        <begin position="293"/>
        <end position="466"/>
    </location>
</feature>
<feature type="region of interest" description="Disordered" evidence="7">
    <location>
        <begin position="511"/>
        <end position="558"/>
    </location>
</feature>
<feature type="region of interest" description="Disordered" evidence="7">
    <location>
        <begin position="580"/>
        <end position="649"/>
    </location>
</feature>
<feature type="region of interest" description="Disordered" evidence="7">
    <location>
        <begin position="1583"/>
        <end position="1775"/>
    </location>
</feature>
<feature type="region of interest" description="Disordered" evidence="7">
    <location>
        <begin position="1789"/>
        <end position="1894"/>
    </location>
</feature>
<feature type="region of interest" description="Disordered" evidence="7">
    <location>
        <begin position="2022"/>
        <end position="2193"/>
    </location>
</feature>
<feature type="coiled-coil region" evidence="1">
    <location>
        <begin position="38"/>
        <end position="58"/>
    </location>
</feature>
<feature type="coiled-coil region" evidence="1">
    <location>
        <begin position="726"/>
        <end position="795"/>
    </location>
</feature>
<feature type="coiled-coil region" evidence="1">
    <location>
        <begin position="1109"/>
        <end position="1129"/>
    </location>
</feature>
<feature type="coiled-coil region" evidence="1">
    <location>
        <begin position="1618"/>
        <end position="1638"/>
    </location>
</feature>
<feature type="short sequence motif" description="Nuclear localization signal 1" evidence="5">
    <location>
        <begin position="705"/>
        <end position="712"/>
    </location>
</feature>
<feature type="short sequence motif" description="Nuclear localization signal 2" evidence="5">
    <location>
        <begin position="1901"/>
        <end position="1908"/>
    </location>
</feature>
<feature type="compositionally biased region" description="Gly residues" evidence="7">
    <location>
        <begin position="1"/>
        <end position="10"/>
    </location>
</feature>
<feature type="compositionally biased region" description="Low complexity" evidence="7">
    <location>
        <begin position="23"/>
        <end position="62"/>
    </location>
</feature>
<feature type="compositionally biased region" description="Gly residues" evidence="7">
    <location>
        <begin position="79"/>
        <end position="88"/>
    </location>
</feature>
<feature type="compositionally biased region" description="Low complexity" evidence="7">
    <location>
        <begin position="91"/>
        <end position="102"/>
    </location>
</feature>
<feature type="compositionally biased region" description="Low complexity" evidence="7">
    <location>
        <begin position="110"/>
        <end position="126"/>
    </location>
</feature>
<feature type="compositionally biased region" description="Low complexity" evidence="7">
    <location>
        <begin position="180"/>
        <end position="192"/>
    </location>
</feature>
<feature type="compositionally biased region" description="Polar residues" evidence="7">
    <location>
        <begin position="204"/>
        <end position="223"/>
    </location>
</feature>
<feature type="compositionally biased region" description="Low complexity" evidence="7">
    <location>
        <begin position="301"/>
        <end position="320"/>
    </location>
</feature>
<feature type="compositionally biased region" description="Polar residues" evidence="7">
    <location>
        <begin position="325"/>
        <end position="339"/>
    </location>
</feature>
<feature type="compositionally biased region" description="Polar residues" evidence="7">
    <location>
        <begin position="347"/>
        <end position="358"/>
    </location>
</feature>
<feature type="compositionally biased region" description="Polar residues" evidence="7">
    <location>
        <begin position="383"/>
        <end position="412"/>
    </location>
</feature>
<feature type="compositionally biased region" description="Polar residues" evidence="7">
    <location>
        <begin position="421"/>
        <end position="433"/>
    </location>
</feature>
<feature type="compositionally biased region" description="Low complexity" evidence="7">
    <location>
        <begin position="445"/>
        <end position="463"/>
    </location>
</feature>
<feature type="compositionally biased region" description="Basic and acidic residues" evidence="7">
    <location>
        <begin position="517"/>
        <end position="537"/>
    </location>
</feature>
<feature type="compositionally biased region" description="Basic and acidic residues" evidence="7">
    <location>
        <begin position="611"/>
        <end position="621"/>
    </location>
</feature>
<feature type="compositionally biased region" description="Polar residues" evidence="7">
    <location>
        <begin position="626"/>
        <end position="638"/>
    </location>
</feature>
<feature type="compositionally biased region" description="Basic residues" evidence="7">
    <location>
        <begin position="1608"/>
        <end position="1617"/>
    </location>
</feature>
<feature type="compositionally biased region" description="Acidic residues" evidence="7">
    <location>
        <begin position="1642"/>
        <end position="1657"/>
    </location>
</feature>
<feature type="compositionally biased region" description="Basic and acidic residues" evidence="7">
    <location>
        <begin position="1821"/>
        <end position="1832"/>
    </location>
</feature>
<feature type="compositionally biased region" description="Low complexity" evidence="7">
    <location>
        <begin position="1833"/>
        <end position="1842"/>
    </location>
</feature>
<feature type="compositionally biased region" description="Polar residues" evidence="7">
    <location>
        <begin position="1848"/>
        <end position="1870"/>
    </location>
</feature>
<feature type="compositionally biased region" description="Polar residues" evidence="7">
    <location>
        <begin position="1882"/>
        <end position="1892"/>
    </location>
</feature>
<feature type="compositionally biased region" description="Polar residues" evidence="7">
    <location>
        <begin position="2022"/>
        <end position="2032"/>
    </location>
</feature>
<feature type="compositionally biased region" description="Polar residues" evidence="7">
    <location>
        <begin position="2149"/>
        <end position="2166"/>
    </location>
</feature>
<feature type="binding site" evidence="3">
    <location>
        <begin position="1006"/>
        <end position="1013"/>
    </location>
    <ligand>
        <name>ATP</name>
        <dbReference type="ChEBI" id="CHEBI:30616"/>
    </ligand>
</feature>
<feature type="modified residue" description="N-acetylmethionine" evidence="25">
    <location>
        <position position="1"/>
    </location>
</feature>
<feature type="modified residue" description="Phosphoserine" evidence="22 24">
    <location>
        <position position="1641"/>
    </location>
</feature>
<feature type="modified residue" description="Phosphoserine" evidence="23">
    <location>
        <position position="2137"/>
    </location>
</feature>
<feature type="splice variant" id="VSP_034709" description="In isoform 2." evidence="19">
    <original>EVCAM</original>
    <variation>VKFE</variation>
    <location>
        <begin position="1075"/>
        <end position="1079"/>
    </location>
</feature>
<feature type="mutagenesis site" description="In brm-5/essp3; ectopic expression of seed storage proteins in leaves." evidence="12">
    <original>G</original>
    <variation>R</variation>
    <location>
        <position position="1138"/>
    </location>
</feature>
<proteinExistence type="evidence at protein level"/>
<sequence>MQSGGSGGGPARNPAMGPAGRTASTSSAASPSSSSSSVQQQQQQQQQQQQQQQLASRQQQQQHRNSDTNENMFAYQPGGVQGMMGGGNFASSPGSMQMPQQSRNFFESPQQQQQQQQQGSSTQEGQQNFNPMQQAYIQFAMQAQHQKAQQQARMGMVGSSSVGKDQDARMGMLNMQDLNPSSQPQASSSKPSGDQFARGERQTESSSQQRNETKSHPQQQVGTGQLMPGNMIRPMQAPQAQQLVNNMGNNQLAFAQQWQAMQAWARERNIDLSHPANASQMAHILQARMAAQQKAGEGNVASQSPSIPISSQPASSSVVPGENSPHANSASDISGQSGSAKARHALSTGSFASTSSPRMVNPAMNPFSGQGRENPMYPRHLVQPTNGMPSGNPLQTSANETPVLDQNASTKKSLGPAEHLQMQQPRQLNTPTPNLVAPSDTGPLSNSSLQSGQGTQQAQQRSGFTKQQLHVLKAQILAFRRLKKGEGSLPPELLQAISPPPLELQTQRQISPAIGKVQDRSSDKTGEDQARSLECGKESQAAASSNGPIFSKEEDNVGDTEVALTTGHSQLFQNLGKEATSTDVATKEEQQTDVFPVKSDQGADSSTQKNPRSDSTADKGKAVASDGSQSKVPPQANSPQPPKDTASARKYYGPLFDFPFFTRKLDSYGSATANANNNLTLAYDIKDLICEEGAEFLSKKRTDSLKKINGLLAKNLERKRIRPDLVLRLQIEEKKLRLSDLQSRVREEVDRQQQEIMSMPDRPYRKFVRLCERQRLEMNRQVLANQKAVREKQLKTIFQWRKKLLEAHWAIRDARTARNRGVAKYHEKMLREFSKRKDDGRNKRMEALKNNDVERYREMLLEQQTNMPGDAAERYAVLSSFLTQTEDYLHKLGGKITATKNQQEVEEAANAAAVAARLQGLSEEEVRAAATCAREEVVIRNRFTEMNAPKENSSVNKYYTLAHAVNEVVVRQPSMLQAGTLRDYQLVGLQWMLSLYNNKLNGILADEMGLGKTVQVMALIAYLMEFKGNYGPHLIIVPNAVLVNWKSELHTWLPSVSCIYYVGTKDQRSKLFSQEVCAMKFNVLVTTYEFIMYDRSKLSKVDWKYIIIDEAQRMKDRESVLARDLDRYRCQRRLLLTGTPLQNDLKELWSLLNLLLPDVFDNRKAFHDWFAQPFQKEGPAHNIEDDWLETEKKVIVIHRLHQILEPFMLRRRVEDVEGSLPAKVSVVLRCRMSAIQSAVYDWIKATGTLRVDPDDEKLRAQKNPIYQAKIYRTLNNRCMELRKACNHPLLNYPYFNDFSKDFLVRSCGKLWILDRILIKLQRTGHRVLLFSTMTKLLDILEEYLQWRRLVYRRIDGTTSLEDRESAIVDFNDPDTDCFIFLLSIRAAGRGLNLQTADTVVIYDPDPNPKNEEQAVARAHRIGQTREVKVIYMEAVVEKLSSHQKEDELRSGGSVDLEDDMAGKDRYIGSIEGLIRNNIQQYKIDMADEVINAGRFDQRTTHEERRMTLETLLHDEERYQETVHDVPSLHEVNRMIARSEEEVELFDQMDEEFDWTEEMTNHEQVPKWLRASTREVNATVADLSKKPSKNMLSSSNLIVQPGGPGGERKRGRPKSKKINYKEIEDDIAGYSEESSEERNIDSGNEEEGDIRQFDDDELTGALGDHQTNKGEFDGENPVCGYDYPPGSGSYKKNPPRDDAGSSGSSPESHRSKEMASPVSSQKFGSLSALDTRPGSVSKRLLDDLEEGEIAASGDSHIDLQRSGSWAHDRDEGDEEQVLQPTIKRKRSIRLRPRQTAERVDGSEMPAAQPLQVDRSYRSKLRTVVDSHSSRQDQSDSSSRLRSVPAKKVASTSKLHVSSPKSGRLNATQLTVEDNAEASRETWDGTSPISSSNAGARMSHIIQKRCKIVISKLQRRIDKEGQQIVPMLTNLWKRIQNGYAAGGVNNLLELREIDHRVERLEYAGVMELASDVQLMLRGAMQFYGFSHEVRSEAKKVHNLFFDLLKMSFPDTDFREARNALSFSGSAPTLVSTPTPRGAGISQGKRQKLVNEPETEPSSPQRSQQRENSRIRVQIPQKETKLGGTTSHTDESPILAHPGELVICKKKRKDREKSGPKTRTGGSSSPVSPPPAMIGRGLRSPVSGGVPRETRLAQQQRWPNQPTHPNNSGAAGDSVGWANPVKRLRTDSGKRRPSHL</sequence>
<protein>
    <recommendedName>
        <fullName evidence="17">ATP-dependent helicase BRM</fullName>
        <ecNumber>3.6.4.12</ecNumber>
    </recommendedName>
    <alternativeName>
        <fullName evidence="17">Protein BRAHMA</fullName>
        <shortName evidence="17">AtBRM</shortName>
    </alternativeName>
    <alternativeName>
        <fullName evidence="18">Protein CHROMATIN REMODELING 2</fullName>
        <shortName evidence="18">AtCHR2</shortName>
    </alternativeName>
</protein>
<reference key="1">
    <citation type="journal article" date="2004" name="Development">
        <title>The Arabidopsis thaliana SNF2 homolog AtBRM controls shoot development and flowering.</title>
        <authorList>
            <person name="Farrona S."/>
            <person name="Hurtado L."/>
            <person name="Bowman J.L."/>
            <person name="Reyes J.C."/>
        </authorList>
    </citation>
    <scope>NUCLEOTIDE SEQUENCE [MRNA] (ISOFORM 1)</scope>
    <scope>INTERACTION WITH SWI3C AND BSH</scope>
    <scope>SUBCELLULAR LOCATION</scope>
    <scope>TISSUE SPECIFICITY</scope>
    <source>
        <strain>cv. Columbia</strain>
    </source>
</reference>
<reference key="2">
    <citation type="journal article" date="1999" name="Nature">
        <title>Sequence and analysis of chromosome 2 of the plant Arabidopsis thaliana.</title>
        <authorList>
            <person name="Lin X."/>
            <person name="Kaul S."/>
            <person name="Rounsley S.D."/>
            <person name="Shea T.P."/>
            <person name="Benito M.-I."/>
            <person name="Town C.D."/>
            <person name="Fujii C.Y."/>
            <person name="Mason T.M."/>
            <person name="Bowman C.L."/>
            <person name="Barnstead M.E."/>
            <person name="Feldblyum T.V."/>
            <person name="Buell C.R."/>
            <person name="Ketchum K.A."/>
            <person name="Lee J.J."/>
            <person name="Ronning C.M."/>
            <person name="Koo H.L."/>
            <person name="Moffat K.S."/>
            <person name="Cronin L.A."/>
            <person name="Shen M."/>
            <person name="Pai G."/>
            <person name="Van Aken S."/>
            <person name="Umayam L."/>
            <person name="Tallon L.J."/>
            <person name="Gill J.E."/>
            <person name="Adams M.D."/>
            <person name="Carrera A.J."/>
            <person name="Creasy T.H."/>
            <person name="Goodman H.M."/>
            <person name="Somerville C.R."/>
            <person name="Copenhaver G.P."/>
            <person name="Preuss D."/>
            <person name="Nierman W.C."/>
            <person name="White O."/>
            <person name="Eisen J.A."/>
            <person name="Salzberg S.L."/>
            <person name="Fraser C.M."/>
            <person name="Venter J.C."/>
        </authorList>
    </citation>
    <scope>NUCLEOTIDE SEQUENCE [LARGE SCALE GENOMIC DNA]</scope>
    <source>
        <strain>cv. Columbia</strain>
    </source>
</reference>
<reference key="3">
    <citation type="journal article" date="2017" name="Plant J.">
        <title>Araport11: a complete reannotation of the Arabidopsis thaliana reference genome.</title>
        <authorList>
            <person name="Cheng C.Y."/>
            <person name="Krishnakumar V."/>
            <person name="Chan A.P."/>
            <person name="Thibaud-Nissen F."/>
            <person name="Schobel S."/>
            <person name="Town C.D."/>
        </authorList>
    </citation>
    <scope>GENOME REANNOTATION</scope>
    <source>
        <strain>cv. Columbia</strain>
    </source>
</reference>
<reference key="4">
    <citation type="journal article" date="2006" name="Genetics">
        <title>Involvement of the Arabidopsis SWI2/SNF2 chromatin remodeling gene family in DNA damage response and recombination.</title>
        <authorList>
            <person name="Shaked H."/>
            <person name="Avivi-Ragolsky N."/>
            <person name="Levy A.A."/>
        </authorList>
    </citation>
    <scope>GENE FAMILY</scope>
    <scope>NOMENCLATURE</scope>
</reference>
<reference key="5">
    <citation type="journal article" date="2006" name="Plant Mol. Biol.">
        <title>The putative SWI/SNF complex subunit BRAHMA activates flower homeotic genes in Arabidopsis thaliana.</title>
        <authorList>
            <person name="Hurtado L."/>
            <person name="Farrona S."/>
            <person name="Reyes J.C."/>
        </authorList>
    </citation>
    <scope>FUNCTION</scope>
    <scope>INTERACTION WITH SWI3A; SWI3B AND SWI3D</scope>
</reference>
<reference key="6">
    <citation type="journal article" date="2007" name="J. Mol. Biol.">
        <title>A nucleosome interaction module is required for normal function of Arabidopsis thaliana BRAHMA.</title>
        <authorList>
            <person name="Farrona S."/>
            <person name="Hurtado L."/>
            <person name="Reyes J.C."/>
        </authorList>
    </citation>
    <scope>INTERACTION WITH HISTONES H3 AND H4</scope>
</reference>
<reference key="7">
    <citation type="journal article" date="2007" name="Plant Cell">
        <title>Unique, shared, and redundant roles for the Arabidopsis SWI/SNF chromatin remodeling ATPases BRAHMA and SPLAYED.</title>
        <authorList>
            <person name="Bezhani S."/>
            <person name="Winter C."/>
            <person name="Hershman S."/>
            <person name="Wagner J.D."/>
            <person name="Kennedy J.F."/>
            <person name="Kwon C.S."/>
            <person name="Pfluger J."/>
            <person name="Su Y."/>
            <person name="Wagner D."/>
        </authorList>
    </citation>
    <scope>FUNCTION</scope>
</reference>
<reference key="8">
    <citation type="journal article" date="2008" name="J. Proteome Res.">
        <title>Site-specific phosphorylation profiling of Arabidopsis proteins by mass spectrometry and peptide chip analysis.</title>
        <authorList>
            <person name="de la Fuente van Bentem S."/>
            <person name="Anrather D."/>
            <person name="Dohnal I."/>
            <person name="Roitinger E."/>
            <person name="Csaszar E."/>
            <person name="Joore J."/>
            <person name="Buijnink J."/>
            <person name="Carreri A."/>
            <person name="Forzani C."/>
            <person name="Lorkovic Z.J."/>
            <person name="Barta A."/>
            <person name="Lecourieux D."/>
            <person name="Verhounig A."/>
            <person name="Jonak C."/>
            <person name="Hirt H."/>
        </authorList>
    </citation>
    <scope>PHOSPHORYLATION [LARGE SCALE ANALYSIS] AT SER-1641</scope>
    <scope>IDENTIFICATION BY MASS SPECTROMETRY [LARGE SCALE ANALYSIS]</scope>
    <source>
        <tissue>Root</tissue>
    </source>
</reference>
<reference key="9">
    <citation type="journal article" date="2008" name="Plant Physiol.">
        <title>The Arabidopsis BRAHMA chromatin-remodeling ATPase is involved in repression of seed maturation genes in leaves.</title>
        <authorList>
            <person name="Tang X."/>
            <person name="Hou A."/>
            <person name="Babu M."/>
            <person name="Nguyen V."/>
            <person name="Hurtado L."/>
            <person name="Lu Q."/>
            <person name="Reyes J.C."/>
            <person name="Wang A."/>
            <person name="Keller W.A."/>
            <person name="Harada J.J."/>
            <person name="Tsang E.W.T."/>
            <person name="Cui Y."/>
        </authorList>
    </citation>
    <scope>FUNCTION</scope>
    <scope>MUTAGENESIS OF GLY-1138</scope>
</reference>
<reference key="10">
    <citation type="journal article" date="2009" name="J. Proteomics">
        <title>Phosphoproteomic analysis of nuclei-enriched fractions from Arabidopsis thaliana.</title>
        <authorList>
            <person name="Jones A.M.E."/>
            <person name="MacLean D."/>
            <person name="Studholme D.J."/>
            <person name="Serna-Sanz A."/>
            <person name="Andreasson E."/>
            <person name="Rathjen J.P."/>
            <person name="Peck S.C."/>
        </authorList>
    </citation>
    <scope>SUBCELLULAR LOCATION</scope>
    <scope>PHOSPHORYLATION [LARGE SCALE ANALYSIS] AT SER-2137</scope>
    <scope>IDENTIFICATION BY MASS SPECTROMETRY [LARGE SCALE ANALYSIS]</scope>
    <source>
        <strain>cv. Columbia</strain>
    </source>
</reference>
<reference key="11">
    <citation type="journal article" date="2009" name="Plant Physiol.">
        <title>Large-scale Arabidopsis phosphoproteome profiling reveals novel chloroplast kinase substrates and phosphorylation networks.</title>
        <authorList>
            <person name="Reiland S."/>
            <person name="Messerli G."/>
            <person name="Baerenfaller K."/>
            <person name="Gerrits B."/>
            <person name="Endler A."/>
            <person name="Grossmann J."/>
            <person name="Gruissem W."/>
            <person name="Baginsky S."/>
        </authorList>
    </citation>
    <scope>PHOSPHORYLATION [LARGE SCALE ANALYSIS] AT SER-1641</scope>
    <scope>IDENTIFICATION BY MASS SPECTROMETRY [LARGE SCALE ANALYSIS]</scope>
</reference>
<reference key="12">
    <citation type="journal article" date="2012" name="Mol. Cell. Proteomics">
        <title>Comparative large-scale characterisation of plant vs. mammal proteins reveals similar and idiosyncratic N-alpha acetylation features.</title>
        <authorList>
            <person name="Bienvenut W.V."/>
            <person name="Sumpton D."/>
            <person name="Martinez A."/>
            <person name="Lilla S."/>
            <person name="Espagne C."/>
            <person name="Meinnel T."/>
            <person name="Giglione C."/>
        </authorList>
    </citation>
    <scope>ACETYLATION [LARGE SCALE ANALYSIS] AT MET-1</scope>
    <scope>IDENTIFICATION BY MASS SPECTROMETRY [LARGE SCALE ANALYSIS]</scope>
</reference>
<reference key="13">
    <citation type="journal article" date="2012" name="Proc. Natl. Acad. Sci. U.S.A.">
        <title>SWI2/SNF2 chromatin remodeling ATPases overcome polycomb repression and control floral organ identity with the LEAFY and SEPALLATA3 transcription factors.</title>
        <authorList>
            <person name="Wu M.F."/>
            <person name="Sang Y."/>
            <person name="Bezhani S."/>
            <person name="Yamaguchi N."/>
            <person name="Han S.K."/>
            <person name="Li Z."/>
            <person name="Su Y."/>
            <person name="Slewinski T.L."/>
            <person name="Wagner D."/>
        </authorList>
    </citation>
    <scope>INTERACTION WITH LFY</scope>
</reference>
<reference key="14">
    <citation type="journal article" date="2013" name="PLoS ONE">
        <title>Genome-wide comparative in silico analysis of the RNA helicase gene family in Zea mays and Glycine max: a comparison with Arabidopsis and Oryza sativa.</title>
        <authorList>
            <person name="Xu R."/>
            <person name="Zhang S."/>
            <person name="Huang J."/>
            <person name="Zheng C."/>
        </authorList>
    </citation>
    <scope>GENE FAMILY</scope>
</reference>
<reference key="15">
    <citation type="journal article" date="2016" name="Elife">
        <title>Arabidopsis FORGETTER1 mediates stress-induced chromatin memory through nucleosome remodeling.</title>
        <authorList>
            <person name="Brzezinka K."/>
            <person name="Altmann S."/>
            <person name="Czesnick H."/>
            <person name="Nicolas P."/>
            <person name="Gorka M."/>
            <person name="Benke E."/>
            <person name="Kabelitz T."/>
            <person name="Jaehne F."/>
            <person name="Graf A."/>
            <person name="Kappel C."/>
            <person name="Baeurle I."/>
        </authorList>
    </citation>
    <scope>FUNCTION</scope>
    <scope>DISRUPTION PHENOTYPE</scope>
    <scope>INTERACTION WITH FGT1</scope>
    <source>
        <strain>cv. Columbia</strain>
    </source>
</reference>
<reference key="16">
    <citation type="journal article" date="2016" name="Nat. Genet.">
        <title>Concerted genomic targeting of H3K27 demethylase REF6 and chromatin-remodeling ATPase BRM in Arabidopsis.</title>
        <authorList>
            <person name="Li C."/>
            <person name="Gu L."/>
            <person name="Gao L."/>
            <person name="Chen C."/>
            <person name="Wei C.Q."/>
            <person name="Qiu Q."/>
            <person name="Chien C.W."/>
            <person name="Wang S."/>
            <person name="Jiang L."/>
            <person name="Ai L.F."/>
            <person name="Chen C.Y."/>
            <person name="Yang S."/>
            <person name="Nguyen V."/>
            <person name="Qi Y."/>
            <person name="Snyder M.P."/>
            <person name="Burlingame A.L."/>
            <person name="Kohalmi S.E."/>
            <person name="Huang S."/>
            <person name="Cao X."/>
            <person name="Wang Z.Y."/>
            <person name="Wu K."/>
            <person name="Chen X."/>
            <person name="Cui Y."/>
        </authorList>
    </citation>
    <scope>FUNCTION</scope>
    <scope>SUBCELLULAR LOCATION</scope>
    <scope>INTERACTION WITH REF6</scope>
</reference>
<name>BRM_ARATH</name>
<accession>Q6EVK6</accession>
<accession>O82366</accession>
<accession>O82780</accession>
<gene>
    <name evidence="17" type="primary">BRM</name>
    <name evidence="18" type="synonym">CHR2</name>
    <name evidence="20" type="ordered locus">At2g46020</name>
    <name type="ORF">F4I18</name>
    <name evidence="21" type="ORF">T3F17.33</name>
</gene>
<dbReference type="EC" id="3.6.4.12"/>
<dbReference type="EMBL" id="AJ703891">
    <property type="protein sequence ID" value="CAG28313.1"/>
    <property type="molecule type" value="mRNA"/>
</dbReference>
<dbReference type="EMBL" id="AC004665">
    <property type="protein sequence ID" value="AAM14971.1"/>
    <property type="status" value="ALT_SEQ"/>
    <property type="molecule type" value="Genomic_DNA"/>
</dbReference>
<dbReference type="EMBL" id="AC005397">
    <property type="protein sequence ID" value="AAC62900.1"/>
    <property type="status" value="ALT_SEQ"/>
    <property type="molecule type" value="Genomic_DNA"/>
</dbReference>
<dbReference type="EMBL" id="AC005397">
    <property type="protein sequence ID" value="AAC62901.1"/>
    <property type="status" value="ALT_SEQ"/>
    <property type="molecule type" value="Genomic_DNA"/>
</dbReference>
<dbReference type="EMBL" id="CP002685">
    <property type="protein sequence ID" value="AEC10632.1"/>
    <property type="molecule type" value="Genomic_DNA"/>
</dbReference>
<dbReference type="EMBL" id="CP002685">
    <property type="protein sequence ID" value="AEC10633.1"/>
    <property type="molecule type" value="Genomic_DNA"/>
</dbReference>
<dbReference type="EMBL" id="CP002685">
    <property type="protein sequence ID" value="ANM61549.1"/>
    <property type="molecule type" value="Genomic_DNA"/>
</dbReference>
<dbReference type="EMBL" id="CP002685">
    <property type="protein sequence ID" value="ANM61550.1"/>
    <property type="molecule type" value="Genomic_DNA"/>
</dbReference>
<dbReference type="EMBL" id="CP002685">
    <property type="protein sequence ID" value="ANM61551.1"/>
    <property type="molecule type" value="Genomic_DNA"/>
</dbReference>
<dbReference type="EMBL" id="CP002685">
    <property type="protein sequence ID" value="ANM61552.1"/>
    <property type="molecule type" value="Genomic_DNA"/>
</dbReference>
<dbReference type="PIR" id="G84897">
    <property type="entry name" value="G84897"/>
</dbReference>
<dbReference type="RefSeq" id="NP_001318432.1">
    <molecule id="Q6EVK6-2"/>
    <property type="nucleotide sequence ID" value="NM_001337166.1"/>
</dbReference>
<dbReference type="RefSeq" id="NP_001323760.1">
    <molecule id="Q6EVK6-1"/>
    <property type="nucleotide sequence ID" value="NM_001337168.1"/>
</dbReference>
<dbReference type="RefSeq" id="NP_001323761.1">
    <molecule id="Q6EVK6-2"/>
    <property type="nucleotide sequence ID" value="NM_001337169.1"/>
</dbReference>
<dbReference type="RefSeq" id="NP_001323762.1">
    <molecule id="Q6EVK6-1"/>
    <property type="nucleotide sequence ID" value="NM_001337167.1"/>
</dbReference>
<dbReference type="RefSeq" id="NP_182126.2">
    <molecule id="Q6EVK6-2"/>
    <property type="nucleotide sequence ID" value="NM_130165.3"/>
</dbReference>
<dbReference type="RefSeq" id="NP_973695.1">
    <molecule id="Q6EVK6-1"/>
    <property type="nucleotide sequence ID" value="NM_201966.2"/>
</dbReference>
<dbReference type="SMR" id="Q6EVK6"/>
<dbReference type="BioGRID" id="4545">
    <property type="interactions" value="170"/>
</dbReference>
<dbReference type="ComplexPortal" id="CPX-7723">
    <property type="entry name" value="BRAHMA SWI/SNF ATP-dependent chromatin remodeling complex"/>
</dbReference>
<dbReference type="DIP" id="DIP-46526N"/>
<dbReference type="FunCoup" id="Q6EVK6">
    <property type="interactions" value="1817"/>
</dbReference>
<dbReference type="IntAct" id="Q6EVK6">
    <property type="interactions" value="7"/>
</dbReference>
<dbReference type="STRING" id="3702.Q6EVK6"/>
<dbReference type="GlyGen" id="Q6EVK6">
    <property type="glycosylation" value="5 sites, 1 O-linked glycan (5 sites)"/>
</dbReference>
<dbReference type="iPTMnet" id="Q6EVK6"/>
<dbReference type="PaxDb" id="3702-AT2G46020.2"/>
<dbReference type="ProteomicsDB" id="240409">
    <molecule id="Q6EVK6-1"/>
</dbReference>
<dbReference type="EnsemblPlants" id="AT2G46020.1">
    <molecule id="Q6EVK6-2"/>
    <property type="protein sequence ID" value="AT2G46020.1"/>
    <property type="gene ID" value="AT2G46020"/>
</dbReference>
<dbReference type="EnsemblPlants" id="AT2G46020.2">
    <molecule id="Q6EVK6-1"/>
    <property type="protein sequence ID" value="AT2G46020.2"/>
    <property type="gene ID" value="AT2G46020"/>
</dbReference>
<dbReference type="EnsemblPlants" id="AT2G46020.3">
    <molecule id="Q6EVK6-1"/>
    <property type="protein sequence ID" value="AT2G46020.3"/>
    <property type="gene ID" value="AT2G46020"/>
</dbReference>
<dbReference type="EnsemblPlants" id="AT2G46020.4">
    <molecule id="Q6EVK6-1"/>
    <property type="protein sequence ID" value="AT2G46020.4"/>
    <property type="gene ID" value="AT2G46020"/>
</dbReference>
<dbReference type="EnsemblPlants" id="AT2G46020.5">
    <molecule id="Q6EVK6-2"/>
    <property type="protein sequence ID" value="AT2G46020.5"/>
    <property type="gene ID" value="AT2G46020"/>
</dbReference>
<dbReference type="EnsemblPlants" id="AT2G46020.6">
    <molecule id="Q6EVK6-2"/>
    <property type="protein sequence ID" value="AT2G46020.6"/>
    <property type="gene ID" value="AT2G46020"/>
</dbReference>
<dbReference type="GeneID" id="819210"/>
<dbReference type="Gramene" id="AT2G46020.1">
    <molecule id="Q6EVK6-2"/>
    <property type="protein sequence ID" value="AT2G46020.1"/>
    <property type="gene ID" value="AT2G46020"/>
</dbReference>
<dbReference type="Gramene" id="AT2G46020.2">
    <molecule id="Q6EVK6-1"/>
    <property type="protein sequence ID" value="AT2G46020.2"/>
    <property type="gene ID" value="AT2G46020"/>
</dbReference>
<dbReference type="Gramene" id="AT2G46020.3">
    <molecule id="Q6EVK6-1"/>
    <property type="protein sequence ID" value="AT2G46020.3"/>
    <property type="gene ID" value="AT2G46020"/>
</dbReference>
<dbReference type="Gramene" id="AT2G46020.4">
    <molecule id="Q6EVK6-1"/>
    <property type="protein sequence ID" value="AT2G46020.4"/>
    <property type="gene ID" value="AT2G46020"/>
</dbReference>
<dbReference type="Gramene" id="AT2G46020.5">
    <molecule id="Q6EVK6-2"/>
    <property type="protein sequence ID" value="AT2G46020.5"/>
    <property type="gene ID" value="AT2G46020"/>
</dbReference>
<dbReference type="Gramene" id="AT2G46020.6">
    <molecule id="Q6EVK6-2"/>
    <property type="protein sequence ID" value="AT2G46020.6"/>
    <property type="gene ID" value="AT2G46020"/>
</dbReference>
<dbReference type="KEGG" id="ath:AT2G46020"/>
<dbReference type="Araport" id="AT2G46020"/>
<dbReference type="TAIR" id="AT2G46020">
    <property type="gene designation" value="BRM"/>
</dbReference>
<dbReference type="eggNOG" id="KOG0386">
    <property type="taxonomic scope" value="Eukaryota"/>
</dbReference>
<dbReference type="HOGENOM" id="CLU_000942_0_1_1"/>
<dbReference type="InParanoid" id="Q6EVK6"/>
<dbReference type="OMA" id="HNQAPKW"/>
<dbReference type="PhylomeDB" id="Q6EVK6"/>
<dbReference type="CD-CODE" id="4299E36E">
    <property type="entry name" value="Nucleolus"/>
</dbReference>
<dbReference type="PRO" id="PR:Q6EVK6"/>
<dbReference type="Proteomes" id="UP000006548">
    <property type="component" value="Chromosome 2"/>
</dbReference>
<dbReference type="ExpressionAtlas" id="Q6EVK6">
    <property type="expression patterns" value="baseline and differential"/>
</dbReference>
<dbReference type="GO" id="GO:0005634">
    <property type="term" value="C:nucleus"/>
    <property type="evidence" value="ECO:0000314"/>
    <property type="project" value="TAIR"/>
</dbReference>
<dbReference type="GO" id="GO:0005524">
    <property type="term" value="F:ATP binding"/>
    <property type="evidence" value="ECO:0007669"/>
    <property type="project" value="UniProtKB-KW"/>
</dbReference>
<dbReference type="GO" id="GO:0016887">
    <property type="term" value="F:ATP hydrolysis activity"/>
    <property type="evidence" value="ECO:0007669"/>
    <property type="project" value="RHEA"/>
</dbReference>
<dbReference type="GO" id="GO:0003682">
    <property type="term" value="F:chromatin binding"/>
    <property type="evidence" value="ECO:0000314"/>
    <property type="project" value="UniProtKB"/>
</dbReference>
<dbReference type="GO" id="GO:0003677">
    <property type="term" value="F:DNA binding"/>
    <property type="evidence" value="ECO:0000314"/>
    <property type="project" value="TAIR"/>
</dbReference>
<dbReference type="GO" id="GO:0004386">
    <property type="term" value="F:helicase activity"/>
    <property type="evidence" value="ECO:0007669"/>
    <property type="project" value="UniProtKB-KW"/>
</dbReference>
<dbReference type="GO" id="GO:0040029">
    <property type="term" value="P:epigenetic regulation of gene expression"/>
    <property type="evidence" value="ECO:0000315"/>
    <property type="project" value="TAIR"/>
</dbReference>
<dbReference type="GO" id="GO:0090691">
    <property type="term" value="P:formation of plant organ boundary"/>
    <property type="evidence" value="ECO:0000315"/>
    <property type="project" value="TAIR"/>
</dbReference>
<dbReference type="GO" id="GO:0010199">
    <property type="term" value="P:organ boundary specification between lateral organs and the meristem"/>
    <property type="evidence" value="ECO:0000316"/>
    <property type="project" value="TAIR"/>
</dbReference>
<dbReference type="GO" id="GO:1900036">
    <property type="term" value="P:positive regulation of cellular response to heat"/>
    <property type="evidence" value="ECO:0000315"/>
    <property type="project" value="UniProtKB"/>
</dbReference>
<dbReference type="GO" id="GO:0006355">
    <property type="term" value="P:regulation of DNA-templated transcription"/>
    <property type="evidence" value="ECO:0007669"/>
    <property type="project" value="InterPro"/>
</dbReference>
<dbReference type="GO" id="GO:1903798">
    <property type="term" value="P:regulation of miRNA processing"/>
    <property type="evidence" value="ECO:0000314"/>
    <property type="project" value="TAIR"/>
</dbReference>
<dbReference type="GO" id="GO:0010449">
    <property type="term" value="P:root meristem growth"/>
    <property type="evidence" value="ECO:0000316"/>
    <property type="project" value="TAIR"/>
</dbReference>
<dbReference type="CDD" id="cd04369">
    <property type="entry name" value="Bromodomain"/>
    <property type="match status" value="1"/>
</dbReference>
<dbReference type="CDD" id="cd17996">
    <property type="entry name" value="DEXHc_SMARCA2_SMARCA4"/>
    <property type="match status" value="1"/>
</dbReference>
<dbReference type="CDD" id="cd18793">
    <property type="entry name" value="SF2_C_SNF"/>
    <property type="match status" value="1"/>
</dbReference>
<dbReference type="FunFam" id="1.20.5.170:FF:000100">
    <property type="entry name" value="ATP-dependent helicase BRM"/>
    <property type="match status" value="1"/>
</dbReference>
<dbReference type="FunFam" id="3.40.50.10810:FF:000017">
    <property type="entry name" value="ATP-dependent helicase BRM"/>
    <property type="match status" value="1"/>
</dbReference>
<dbReference type="FunFam" id="3.40.50.300:FF:000762">
    <property type="entry name" value="ATP-dependent helicase BRM"/>
    <property type="match status" value="1"/>
</dbReference>
<dbReference type="FunFam" id="1.20.920.10:FF:000038">
    <property type="entry name" value="Brahma1"/>
    <property type="match status" value="1"/>
</dbReference>
<dbReference type="Gene3D" id="1.20.5.170">
    <property type="match status" value="1"/>
</dbReference>
<dbReference type="Gene3D" id="1.20.920.10">
    <property type="entry name" value="Bromodomain-like"/>
    <property type="match status" value="1"/>
</dbReference>
<dbReference type="Gene3D" id="3.40.50.300">
    <property type="entry name" value="P-loop containing nucleotide triphosphate hydrolases"/>
    <property type="match status" value="1"/>
</dbReference>
<dbReference type="Gene3D" id="3.40.50.10810">
    <property type="entry name" value="Tandem AAA-ATPase domain"/>
    <property type="match status" value="1"/>
</dbReference>
<dbReference type="InterPro" id="IPR001487">
    <property type="entry name" value="Bromodomain"/>
</dbReference>
<dbReference type="InterPro" id="IPR036427">
    <property type="entry name" value="Bromodomain-like_sf"/>
</dbReference>
<dbReference type="InterPro" id="IPR014978">
    <property type="entry name" value="Gln-Leu-Gln_QLQ"/>
</dbReference>
<dbReference type="InterPro" id="IPR014001">
    <property type="entry name" value="Helicase_ATP-bd"/>
</dbReference>
<dbReference type="InterPro" id="IPR001650">
    <property type="entry name" value="Helicase_C-like"/>
</dbReference>
<dbReference type="InterPro" id="IPR027417">
    <property type="entry name" value="P-loop_NTPase"/>
</dbReference>
<dbReference type="InterPro" id="IPR038718">
    <property type="entry name" value="SNF2-like_sf"/>
</dbReference>
<dbReference type="InterPro" id="IPR049730">
    <property type="entry name" value="SNF2/RAD54-like_C"/>
</dbReference>
<dbReference type="InterPro" id="IPR000330">
    <property type="entry name" value="SNF2_N"/>
</dbReference>
<dbReference type="PANTHER" id="PTHR10799">
    <property type="entry name" value="SNF2/RAD54 HELICASE FAMILY"/>
    <property type="match status" value="1"/>
</dbReference>
<dbReference type="Pfam" id="PF00271">
    <property type="entry name" value="Helicase_C"/>
    <property type="match status" value="1"/>
</dbReference>
<dbReference type="Pfam" id="PF00176">
    <property type="entry name" value="SNF2-rel_dom"/>
    <property type="match status" value="1"/>
</dbReference>
<dbReference type="SMART" id="SM00297">
    <property type="entry name" value="BROMO"/>
    <property type="match status" value="1"/>
</dbReference>
<dbReference type="SMART" id="SM00487">
    <property type="entry name" value="DEXDc"/>
    <property type="match status" value="1"/>
</dbReference>
<dbReference type="SMART" id="SM00490">
    <property type="entry name" value="HELICc"/>
    <property type="match status" value="1"/>
</dbReference>
<dbReference type="SMART" id="SM00951">
    <property type="entry name" value="QLQ"/>
    <property type="match status" value="1"/>
</dbReference>
<dbReference type="SUPFAM" id="SSF47370">
    <property type="entry name" value="Bromodomain"/>
    <property type="match status" value="1"/>
</dbReference>
<dbReference type="SUPFAM" id="SSF52540">
    <property type="entry name" value="P-loop containing nucleoside triphosphate hydrolases"/>
    <property type="match status" value="2"/>
</dbReference>
<dbReference type="PROSITE" id="PS50014">
    <property type="entry name" value="BROMODOMAIN_2"/>
    <property type="match status" value="1"/>
</dbReference>
<dbReference type="PROSITE" id="PS51192">
    <property type="entry name" value="HELICASE_ATP_BIND_1"/>
    <property type="match status" value="1"/>
</dbReference>
<dbReference type="PROSITE" id="PS51194">
    <property type="entry name" value="HELICASE_CTER"/>
    <property type="match status" value="1"/>
</dbReference>
<dbReference type="PROSITE" id="PS51666">
    <property type="entry name" value="QLQ"/>
    <property type="match status" value="1"/>
</dbReference>
<organism>
    <name type="scientific">Arabidopsis thaliana</name>
    <name type="common">Mouse-ear cress</name>
    <dbReference type="NCBI Taxonomy" id="3702"/>
    <lineage>
        <taxon>Eukaryota</taxon>
        <taxon>Viridiplantae</taxon>
        <taxon>Streptophyta</taxon>
        <taxon>Embryophyta</taxon>
        <taxon>Tracheophyta</taxon>
        <taxon>Spermatophyta</taxon>
        <taxon>Magnoliopsida</taxon>
        <taxon>eudicotyledons</taxon>
        <taxon>Gunneridae</taxon>
        <taxon>Pentapetalae</taxon>
        <taxon>rosids</taxon>
        <taxon>malvids</taxon>
        <taxon>Brassicales</taxon>
        <taxon>Brassicaceae</taxon>
        <taxon>Camelineae</taxon>
        <taxon>Arabidopsis</taxon>
    </lineage>
</organism>
<keyword id="KW-0007">Acetylation</keyword>
<keyword id="KW-0010">Activator</keyword>
<keyword id="KW-0025">Alternative splicing</keyword>
<keyword id="KW-0067">ATP-binding</keyword>
<keyword id="KW-0103">Bromodomain</keyword>
<keyword id="KW-0156">Chromatin regulator</keyword>
<keyword id="KW-0175">Coiled coil</keyword>
<keyword id="KW-0217">Developmental protein</keyword>
<keyword id="KW-0238">DNA-binding</keyword>
<keyword id="KW-0347">Helicase</keyword>
<keyword id="KW-0378">Hydrolase</keyword>
<keyword id="KW-0547">Nucleotide-binding</keyword>
<keyword id="KW-0539">Nucleus</keyword>
<keyword id="KW-0597">Phosphoprotein</keyword>
<keyword id="KW-1185">Reference proteome</keyword>
<keyword id="KW-0804">Transcription</keyword>
<keyword id="KW-0805">Transcription regulation</keyword>